<dbReference type="EC" id="1.-.-.-" evidence="7"/>
<dbReference type="EMBL" id="CDHK01000010">
    <property type="protein sequence ID" value="CEJ61314.1"/>
    <property type="molecule type" value="Genomic_DNA"/>
</dbReference>
<dbReference type="SMR" id="A0A0F7TXA0"/>
<dbReference type="STRING" id="104259.A0A0F7TXA0"/>
<dbReference type="OrthoDB" id="10029326at2759"/>
<dbReference type="UniPathway" id="UPA00213"/>
<dbReference type="Proteomes" id="UP000042958">
    <property type="component" value="Unassembled WGS sequence"/>
</dbReference>
<dbReference type="GO" id="GO:0016020">
    <property type="term" value="C:membrane"/>
    <property type="evidence" value="ECO:0007669"/>
    <property type="project" value="UniProtKB-SubCell"/>
</dbReference>
<dbReference type="GO" id="GO:0071949">
    <property type="term" value="F:FAD binding"/>
    <property type="evidence" value="ECO:0007669"/>
    <property type="project" value="InterPro"/>
</dbReference>
<dbReference type="GO" id="GO:0004497">
    <property type="term" value="F:monooxygenase activity"/>
    <property type="evidence" value="ECO:0007669"/>
    <property type="project" value="UniProtKB-KW"/>
</dbReference>
<dbReference type="GO" id="GO:0016114">
    <property type="term" value="P:terpenoid biosynthetic process"/>
    <property type="evidence" value="ECO:0007669"/>
    <property type="project" value="UniProtKB-UniPathway"/>
</dbReference>
<dbReference type="Gene3D" id="3.50.50.60">
    <property type="entry name" value="FAD/NAD(P)-binding domain"/>
    <property type="match status" value="1"/>
</dbReference>
<dbReference type="InterPro" id="IPR002938">
    <property type="entry name" value="FAD-bd"/>
</dbReference>
<dbReference type="InterPro" id="IPR036188">
    <property type="entry name" value="FAD/NAD-bd_sf"/>
</dbReference>
<dbReference type="InterPro" id="IPR050562">
    <property type="entry name" value="FAD_mOase_fung"/>
</dbReference>
<dbReference type="PANTHER" id="PTHR47356:SF2">
    <property type="entry name" value="FAD-BINDING DOMAIN-CONTAINING PROTEIN-RELATED"/>
    <property type="match status" value="1"/>
</dbReference>
<dbReference type="PANTHER" id="PTHR47356">
    <property type="entry name" value="FAD-DEPENDENT MONOOXYGENASE ASQG-RELATED"/>
    <property type="match status" value="1"/>
</dbReference>
<dbReference type="Pfam" id="PF01494">
    <property type="entry name" value="FAD_binding_3"/>
    <property type="match status" value="2"/>
</dbReference>
<dbReference type="PRINTS" id="PR00420">
    <property type="entry name" value="RNGMNOXGNASE"/>
</dbReference>
<dbReference type="SUPFAM" id="SSF51905">
    <property type="entry name" value="FAD/NAD(P)-binding domain"/>
    <property type="match status" value="1"/>
</dbReference>
<name>AUSM_PENBI</name>
<protein>
    <recommendedName>
        <fullName evidence="5">FAD-dependent monooxygenase ausM</fullName>
        <ecNumber evidence="7">1.-.-.-</ecNumber>
    </recommendedName>
    <alternativeName>
        <fullName evidence="5">Austinoid biosynthesis clusters protein M</fullName>
    </alternativeName>
</protein>
<feature type="chain" id="PRO_0000453859" description="FAD-dependent monooxygenase ausM">
    <location>
        <begin position="1"/>
        <end position="476"/>
    </location>
</feature>
<feature type="transmembrane region" description="Helical" evidence="3">
    <location>
        <begin position="447"/>
        <end position="467"/>
    </location>
</feature>
<feature type="active site" evidence="1">
    <location>
        <position position="222"/>
    </location>
</feature>
<feature type="binding site" evidence="1">
    <location>
        <position position="41"/>
    </location>
    <ligand>
        <name>FAD</name>
        <dbReference type="ChEBI" id="CHEBI:57692"/>
    </ligand>
</feature>
<feature type="binding site" evidence="1">
    <location>
        <position position="55"/>
    </location>
    <ligand>
        <name>FAD</name>
        <dbReference type="ChEBI" id="CHEBI:57692"/>
    </ligand>
</feature>
<feature type="binding site" evidence="1">
    <location>
        <position position="114"/>
    </location>
    <ligand>
        <name>FAD</name>
        <dbReference type="ChEBI" id="CHEBI:57692"/>
    </ligand>
</feature>
<feature type="binding site" evidence="1">
    <location>
        <position position="314"/>
    </location>
    <ligand>
        <name>FAD</name>
        <dbReference type="ChEBI" id="CHEBI:57692"/>
    </ligand>
</feature>
<feature type="binding site" evidence="1">
    <location>
        <position position="327"/>
    </location>
    <ligand>
        <name>FAD</name>
        <dbReference type="ChEBI" id="CHEBI:57692"/>
    </ligand>
</feature>
<gene>
    <name evidence="5" type="primary">ausM</name>
    <name type="ORF">PMG11_09850</name>
</gene>
<reference key="1">
    <citation type="journal article" date="2015" name="Genome Announc.">
        <title>Draft genome sequence of the fungus Penicillium brasilianum MG11.</title>
        <authorList>
            <person name="Horn F."/>
            <person name="Linde J."/>
            <person name="Mattern D.J."/>
            <person name="Walther G."/>
            <person name="Guthke R."/>
            <person name="Brakhage A.A."/>
            <person name="Valiante V."/>
        </authorList>
    </citation>
    <scope>NUCLEOTIDE SEQUENCE [LARGE SCALE GENOMIC DNA]</scope>
    <source>
        <strain>MG11</strain>
    </source>
</reference>
<reference key="2">
    <citation type="journal article" date="2016" name="J. Am. Chem. Soc.">
        <title>Discovery of key dioxygenases that diverged the paraherquonin and acetoxydehydroaustin pathways in Penicillium brasilianum.</title>
        <authorList>
            <person name="Matsuda Y."/>
            <person name="Iwabuchi T."/>
            <person name="Fujimoto T."/>
            <person name="Awakawa T."/>
            <person name="Nakashima Y."/>
            <person name="Mori T."/>
            <person name="Zhang H."/>
            <person name="Hayashi F."/>
            <person name="Abe I."/>
        </authorList>
    </citation>
    <scope>FUNCTION</scope>
</reference>
<reference key="3">
    <citation type="journal article" date="2017" name="ACS Chem. Biol.">
        <title>Rewiring of the austinoid biosynthetic pathway in filamentous fungi.</title>
        <authorList>
            <person name="Mattern D.J."/>
            <person name="Valiante V."/>
            <person name="Horn F."/>
            <person name="Petzke L."/>
            <person name="Brakhage A.A."/>
        </authorList>
    </citation>
    <scope>FUNCTION</scope>
</reference>
<evidence type="ECO:0000250" key="1">
    <source>
        <dbReference type="UniProtKB" id="B8M9J8"/>
    </source>
</evidence>
<evidence type="ECO:0000250" key="2">
    <source>
        <dbReference type="UniProtKB" id="C8VQ98"/>
    </source>
</evidence>
<evidence type="ECO:0000255" key="3"/>
<evidence type="ECO:0000269" key="4">
    <source>
    </source>
</evidence>
<evidence type="ECO:0000303" key="5">
    <source>
    </source>
</evidence>
<evidence type="ECO:0000305" key="6"/>
<evidence type="ECO:0000305" key="7">
    <source>
    </source>
</evidence>
<keyword id="KW-0274">FAD</keyword>
<keyword id="KW-0285">Flavoprotein</keyword>
<keyword id="KW-0472">Membrane</keyword>
<keyword id="KW-0503">Monooxygenase</keyword>
<keyword id="KW-0560">Oxidoreductase</keyword>
<keyword id="KW-1185">Reference proteome</keyword>
<keyword id="KW-0812">Transmembrane</keyword>
<keyword id="KW-1133">Transmembrane helix</keyword>
<organism>
    <name type="scientific">Penicillium brasilianum</name>
    <dbReference type="NCBI Taxonomy" id="104259"/>
    <lineage>
        <taxon>Eukaryota</taxon>
        <taxon>Fungi</taxon>
        <taxon>Dikarya</taxon>
        <taxon>Ascomycota</taxon>
        <taxon>Pezizomycotina</taxon>
        <taxon>Eurotiomycetes</taxon>
        <taxon>Eurotiomycetidae</taxon>
        <taxon>Eurotiales</taxon>
        <taxon>Aspergillaceae</taxon>
        <taxon>Penicillium</taxon>
    </lineage>
</organism>
<comment type="function">
    <text evidence="2 4">FAD-dependent monooxygenase; part of the gene cluster A that mediates the biosynthesis of the fungal meroterpenoid acetoxydehydroaustin (PubMed:29076725). The first step of the pathway is the synthesis of 3,5-dimethylorsellinic acid by the polyketide synthase ausA (By similarity). 3,5-dimethylorsellinic acid is then prenylated by the polyprenyl transferase ausN (By similarity). Further epoxidation by the FAD-dependent monooxygenase ausM and cyclization by the probable terpene cyclase ausL lead to the formation of protoaustinoid A (By similarity). Protoaustinoid A is then oxidized to spiro-lactone preaustinoid A3 by the combined action of the FAD-binding monooxygenases ausB and ausC, and the dioxygenase ausE (By similarity). Acid-catalyzed keto-rearrangement and ring contraction of the tetraketide portion of preaustinoid A3 by ausJ lead to the formation of preaustinoid A4 (By similarity). The aldo-keto reductase ausK, with the help of ausH, is involved in the next step by transforming preaustinoid A4 into isoaustinone which is in turn hydroxylated by the P450 monooxygenase ausI to form austinolide (By similarity). The cytochrome P450 monooxygenase ausG then modifies austinolide to austinol (By similarity). Austinol is further acetylated to austin by the O-acetyltransferase ausP, which spontaneously changes to dehydroaustin (PubMed:29076725). The cytochrome P450 monooxygenase then converts dehydroaustin is into 7-dehydrodehydroaustin (PubMed:29076725). The hydroxylation catalyzed by ausR permits the second O-acetyltransferase ausQ to add an additional acetyl group to the molecule, leading to the formation of acetoxydehydroaustin (PubMed:29076725). Due to genetic rearrangements of the clusters and the subsequent loss of some enzymes, the end product of the Penicillium brasilianum austinoid biosynthesis clusters is acetoxydehydroaustin (PubMed:29076725).</text>
</comment>
<comment type="cofactor">
    <cofactor evidence="6">
        <name>FAD</name>
        <dbReference type="ChEBI" id="CHEBI:57692"/>
    </cofactor>
</comment>
<comment type="pathway">
    <text evidence="7">Secondary metabolite biosynthesis; terpenoid biosynthesis.</text>
</comment>
<comment type="subcellular location">
    <subcellularLocation>
        <location evidence="3">Membrane</location>
        <topology evidence="3">Single-pass membrane protein</topology>
    </subcellularLocation>
</comment>
<comment type="miscellaneous">
    <text evidence="7">In A.calidoustus, the austinoid gene cluster lies on a contiguous DNA region, while clusters from E.nidulans and P.brasilianum are split in their respective genomes. Genetic rearrangements provoked variability among the clusters and E.nidulans produces the least number of austionoid derivatives with the end products austinol and dehydroaustinol, while P.brasilianum can produce until acetoxydehydroaustin, and A.calidoustus produces the highest number of identified derivatives.</text>
</comment>
<comment type="similarity">
    <text evidence="6">Belongs to the paxM FAD-dependent monooxygenase family.</text>
</comment>
<proteinExistence type="inferred from homology"/>
<accession>A0A0F7TXA0</accession>
<sequence>MSQATVEEKSKLRVIIVGGSVAGLTLAHCLAKANIDHIVLEKRAEISPQEGAFIGIWPNGARIFDQLGLYEDFESLTPPVHRMNVRFPDGFTFSSYLPRTIQERFGYPIISIDRQKVLETLYERYPHKSNVLVNKKVMNVRFSGKGVSVVTEDGSAYDGDLVVGADGIHSRIRSEMWRLADENHPGLITSQDKQAFTVEYACVFGISEQLPSLPAGEHINSYSNGLCVITFHGEKGRIFWFLLVKLPEKTTYPNTPRFSASDAASLCNKFARFRVSEDICVSDLWMHKLFASMTALEEGILERWHYDRIVLLGDSVHKMTPNIGQGANTALEDASVLASLLNNLSKLSTEDGTSAYAMTKLLNEYQSTRYERAKNTHDKSRFGARLHTRDDMIKTLIGRYVFPYAGPRVLERSVKSLATAHSVEYLPFPKRLGPAWGEYSSPNKSTLGSTPIHMLTLLLPCLFYFMYSKLNLFVSL</sequence>